<protein>
    <recommendedName>
        <fullName>Variant surface glycoprotein MITAT 1.4A</fullName>
    </recommendedName>
    <alternativeName>
        <fullName>VSG 117</fullName>
    </alternativeName>
</protein>
<organism>
    <name type="scientific">Trypanosoma brucei brucei</name>
    <dbReference type="NCBI Taxonomy" id="5702"/>
    <lineage>
        <taxon>Eukaryota</taxon>
        <taxon>Discoba</taxon>
        <taxon>Euglenozoa</taxon>
        <taxon>Kinetoplastea</taxon>
        <taxon>Metakinetoplastina</taxon>
        <taxon>Trypanosomatida</taxon>
        <taxon>Trypanosomatidae</taxon>
        <taxon>Trypanosoma</taxon>
    </lineage>
</organism>
<reference key="1">
    <citation type="journal article" date="1982" name="J. Mol. Biol.">
        <title>Complete nucleotide sequence of complementary DNA coding for a variant surface glycoprotein from Trypanosoma brucei.</title>
        <authorList>
            <person name="Boothroyd J.C."/>
            <person name="Paynter C.A."/>
            <person name="Coleman S.L."/>
            <person name="Cross G.A.M."/>
        </authorList>
    </citation>
    <scope>NUCLEOTIDE SEQUENCE [MRNA]</scope>
</reference>
<reference key="2">
    <citation type="journal article" date="1982" name="J. Mol. Biol.">
        <title>Complete amino acids sequence of a variant surface glycoprotein (VSG 117) from Trypanosoma brucei.</title>
        <authorList>
            <person name="Allen G."/>
            <person name="Gurnett L.P."/>
            <person name="Cross G.A.M."/>
        </authorList>
    </citation>
    <scope>PROTEIN SEQUENCE OF 34-503</scope>
</reference>
<dbReference type="EMBL" id="V01387">
    <property type="protein sequence ID" value="CAA24677.1"/>
    <property type="molecule type" value="mRNA"/>
</dbReference>
<dbReference type="EMBL" id="J01214">
    <property type="protein sequence ID" value="AAA30290.1"/>
    <property type="molecule type" value="mRNA"/>
</dbReference>
<dbReference type="EMBL" id="J01215">
    <property type="protein sequence ID" value="AAA30291.1"/>
    <property type="molecule type" value="mRNA"/>
</dbReference>
<dbReference type="PIR" id="A92883">
    <property type="entry name" value="VMUT8B"/>
</dbReference>
<dbReference type="SMR" id="P02896"/>
<dbReference type="GlyConnect" id="615">
    <property type="glycosylation" value="5 N-Linked glycans"/>
</dbReference>
<dbReference type="iPTMnet" id="P02896"/>
<dbReference type="GO" id="GO:0005886">
    <property type="term" value="C:plasma membrane"/>
    <property type="evidence" value="ECO:0007669"/>
    <property type="project" value="UniProtKB-SubCell"/>
</dbReference>
<dbReference type="GO" id="GO:0098552">
    <property type="term" value="C:side of membrane"/>
    <property type="evidence" value="ECO:0007669"/>
    <property type="project" value="UniProtKB-KW"/>
</dbReference>
<dbReference type="GO" id="GO:0042783">
    <property type="term" value="P:symbiont-mediated evasion of host immune response"/>
    <property type="evidence" value="ECO:0007669"/>
    <property type="project" value="InterPro"/>
</dbReference>
<dbReference type="FunFam" id="3.30.1680.30:FF:000002">
    <property type="entry name" value="Variant surface glycoprotein (VSG, atypical), putative"/>
    <property type="match status" value="1"/>
</dbReference>
<dbReference type="Gene3D" id="3.30.1680.30">
    <property type="match status" value="1"/>
</dbReference>
<dbReference type="Gene3D" id="3.30.1680.40">
    <property type="match status" value="1"/>
</dbReference>
<dbReference type="Gene3D" id="3.90.150.10">
    <property type="entry name" value="Variant Surface Glycoprotein, subunit A domain 1"/>
    <property type="match status" value="1"/>
</dbReference>
<dbReference type="Gene3D" id="1.10.470.10">
    <property type="entry name" value="Variant Surface Glycoprotein, subunit A, domain 2"/>
    <property type="match status" value="1"/>
</dbReference>
<dbReference type="InterPro" id="IPR001812">
    <property type="entry name" value="Trypano_VSG_A_N_dom"/>
</dbReference>
<dbReference type="InterPro" id="IPR019609">
    <property type="entry name" value="Variant_surf_glycoprt_trypan_C"/>
</dbReference>
<dbReference type="Pfam" id="PF00913">
    <property type="entry name" value="Trypan_glycop"/>
    <property type="match status" value="1"/>
</dbReference>
<dbReference type="Pfam" id="PF10659">
    <property type="entry name" value="Trypan_glycop_C"/>
    <property type="match status" value="1"/>
</dbReference>
<dbReference type="SUPFAM" id="SSF58087">
    <property type="entry name" value="Variant surface glycoprotein (N-terminal domain)"/>
    <property type="match status" value="1"/>
</dbReference>
<proteinExistence type="evidence at protein level"/>
<comment type="function">
    <text>VSG forms a coat on the surface of the parasite. The trypanosome evades the immune response of the host by expressing a series of antigenically distinct VSGs from an estimated 1000 VSG genes.</text>
</comment>
<comment type="subcellular location">
    <subcellularLocation>
        <location>Cell membrane</location>
        <topology>Lipid-anchor</topology>
        <topology>GPI-anchor</topology>
    </subcellularLocation>
    <text evidence="1">A soluble form is released from ruptured cells by the action of a PI-PLC.</text>
</comment>
<accession>P02896</accession>
<evidence type="ECO:0000250" key="1"/>
<evidence type="ECO:0000255" key="2"/>
<evidence type="ECO:0000256" key="3">
    <source>
        <dbReference type="SAM" id="MobiDB-lite"/>
    </source>
</evidence>
<evidence type="ECO:0000269" key="4">
    <source>
    </source>
</evidence>
<sequence>MDCHTKETLGVTQWRRSTMLTLSLLYAITPADGAKEALEYKTWTNHCGLAATLRKVAGGVLTKLKSHISYRKKLEEMETKLRIYALKGDGVGEQKSAEILATTAALMRQKALTPEEANLKTALKAAGFAGEGAAAVSSYLMTLGTLTTSGSAHCLSNEGGDGDGKDQLAPKGCRHGTEADFDAGAGPAESEVADSGFAQVPGKQDGANAGQANMCALFTHQATPHSSQGIYITGAQTKPSFGYGMLTIGTTDQTIGLKLSDIKGKQADSAQKFWSSCHAAVKAAQDMKADPALKVDQTLLAVLVASPEMAEILKLEAAASQQKGPEEVTIDLATEKNNYFGTNNNKLEPLWTKIKGQNIVDLAATKGSTKELGTVTDTAELQKLLSYYYTVNKEEQKKTAEKITKLETELADQKGKSPESECNKISEEPKCNEDKICSWHKEVKAGEKHCKFNSTKAKEKGVSVTQTQTAGGTEATTDKCKGKLEDTCKKESNCKWENNACKDSSILVTKKFALTVVSAAFVALLF</sequence>
<feature type="signal peptide" evidence="4">
    <location>
        <begin position="1"/>
        <end position="33"/>
    </location>
</feature>
<feature type="chain" id="PRO_0000036435" description="Variant surface glycoprotein MITAT 1.4A">
    <location>
        <begin position="34"/>
        <end position="503"/>
    </location>
</feature>
<feature type="propeptide" id="PRO_0000036436" description="Removed in mature form" evidence="2">
    <location>
        <begin position="504"/>
        <end position="526"/>
    </location>
</feature>
<feature type="region of interest" description="Disordered" evidence="3">
    <location>
        <begin position="157"/>
        <end position="193"/>
    </location>
</feature>
<feature type="lipid moiety-binding region" description="GPI-anchor amidated aspartate" evidence="2">
    <location>
        <position position="503"/>
    </location>
</feature>
<feature type="glycosylation site" description="N-linked (GlcNAc...) asparagine" evidence="4">
    <location>
        <position position="453"/>
    </location>
</feature>
<feature type="disulfide bond" evidence="1">
    <location>
        <begin position="47"/>
        <end position="173"/>
    </location>
</feature>
<feature type="disulfide bond" evidence="1">
    <location>
        <begin position="154"/>
        <end position="215"/>
    </location>
</feature>
<name>VSM4_TRYBB</name>
<keyword id="KW-1003">Cell membrane</keyword>
<keyword id="KW-0903">Direct protein sequencing</keyword>
<keyword id="KW-1015">Disulfide bond</keyword>
<keyword id="KW-0325">Glycoprotein</keyword>
<keyword id="KW-0336">GPI-anchor</keyword>
<keyword id="KW-0449">Lipoprotein</keyword>
<keyword id="KW-0472">Membrane</keyword>
<keyword id="KW-0732">Signal</keyword>
<keyword id="KW-0821">Trypanosomiasis</keyword>